<accession>Q7VQS0</accession>
<comment type="function">
    <text evidence="1">Cell wall formation. Adds enolpyruvyl to UDP-N-acetylglucosamine.</text>
</comment>
<comment type="catalytic activity">
    <reaction evidence="1">
        <text>phosphoenolpyruvate + UDP-N-acetyl-alpha-D-glucosamine = UDP-N-acetyl-3-O-(1-carboxyvinyl)-alpha-D-glucosamine + phosphate</text>
        <dbReference type="Rhea" id="RHEA:18681"/>
        <dbReference type="ChEBI" id="CHEBI:43474"/>
        <dbReference type="ChEBI" id="CHEBI:57705"/>
        <dbReference type="ChEBI" id="CHEBI:58702"/>
        <dbReference type="ChEBI" id="CHEBI:68483"/>
        <dbReference type="EC" id="2.5.1.7"/>
    </reaction>
</comment>
<comment type="pathway">
    <text evidence="1">Cell wall biogenesis; peptidoglycan biosynthesis.</text>
</comment>
<comment type="subcellular location">
    <subcellularLocation>
        <location evidence="1">Cytoplasm</location>
    </subcellularLocation>
</comment>
<comment type="similarity">
    <text evidence="1">Belongs to the EPSP synthase family. MurA subfamily.</text>
</comment>
<dbReference type="EC" id="2.5.1.7" evidence="1"/>
<dbReference type="EMBL" id="BX248583">
    <property type="protein sequence ID" value="CAD83573.1"/>
    <property type="molecule type" value="Genomic_DNA"/>
</dbReference>
<dbReference type="SMR" id="Q7VQS0"/>
<dbReference type="STRING" id="203907.Bfl046"/>
<dbReference type="KEGG" id="bfl:Bfl046"/>
<dbReference type="eggNOG" id="COG0766">
    <property type="taxonomic scope" value="Bacteria"/>
</dbReference>
<dbReference type="HOGENOM" id="CLU_027387_0_0_6"/>
<dbReference type="OrthoDB" id="9803760at2"/>
<dbReference type="UniPathway" id="UPA00219"/>
<dbReference type="Proteomes" id="UP000002192">
    <property type="component" value="Chromosome"/>
</dbReference>
<dbReference type="GO" id="GO:0005737">
    <property type="term" value="C:cytoplasm"/>
    <property type="evidence" value="ECO:0007669"/>
    <property type="project" value="UniProtKB-SubCell"/>
</dbReference>
<dbReference type="GO" id="GO:0008760">
    <property type="term" value="F:UDP-N-acetylglucosamine 1-carboxyvinyltransferase activity"/>
    <property type="evidence" value="ECO:0007669"/>
    <property type="project" value="UniProtKB-UniRule"/>
</dbReference>
<dbReference type="GO" id="GO:0051301">
    <property type="term" value="P:cell division"/>
    <property type="evidence" value="ECO:0007669"/>
    <property type="project" value="UniProtKB-KW"/>
</dbReference>
<dbReference type="GO" id="GO:0071555">
    <property type="term" value="P:cell wall organization"/>
    <property type="evidence" value="ECO:0007669"/>
    <property type="project" value="UniProtKB-KW"/>
</dbReference>
<dbReference type="GO" id="GO:0009252">
    <property type="term" value="P:peptidoglycan biosynthetic process"/>
    <property type="evidence" value="ECO:0007669"/>
    <property type="project" value="UniProtKB-UniRule"/>
</dbReference>
<dbReference type="GO" id="GO:0008360">
    <property type="term" value="P:regulation of cell shape"/>
    <property type="evidence" value="ECO:0007669"/>
    <property type="project" value="UniProtKB-KW"/>
</dbReference>
<dbReference type="GO" id="GO:0019277">
    <property type="term" value="P:UDP-N-acetylgalactosamine biosynthetic process"/>
    <property type="evidence" value="ECO:0007669"/>
    <property type="project" value="InterPro"/>
</dbReference>
<dbReference type="CDD" id="cd01555">
    <property type="entry name" value="UdpNAET"/>
    <property type="match status" value="1"/>
</dbReference>
<dbReference type="FunFam" id="3.65.10.10:FF:000002">
    <property type="entry name" value="UDP-N-acetylglucosamine 1-carboxyvinyltransferase"/>
    <property type="match status" value="1"/>
</dbReference>
<dbReference type="Gene3D" id="3.65.10.10">
    <property type="entry name" value="Enolpyruvate transferase domain"/>
    <property type="match status" value="2"/>
</dbReference>
<dbReference type="HAMAP" id="MF_00111">
    <property type="entry name" value="MurA"/>
    <property type="match status" value="1"/>
</dbReference>
<dbReference type="InterPro" id="IPR001986">
    <property type="entry name" value="Enolpyruvate_Tfrase_dom"/>
</dbReference>
<dbReference type="InterPro" id="IPR036968">
    <property type="entry name" value="Enolpyruvate_Tfrase_sf"/>
</dbReference>
<dbReference type="InterPro" id="IPR050068">
    <property type="entry name" value="MurA_subfamily"/>
</dbReference>
<dbReference type="InterPro" id="IPR013792">
    <property type="entry name" value="RNA3'P_cycl/enolpyr_Trfase_a/b"/>
</dbReference>
<dbReference type="InterPro" id="IPR005750">
    <property type="entry name" value="UDP_GlcNAc_COvinyl_MurA"/>
</dbReference>
<dbReference type="NCBIfam" id="TIGR01072">
    <property type="entry name" value="murA"/>
    <property type="match status" value="1"/>
</dbReference>
<dbReference type="NCBIfam" id="NF006873">
    <property type="entry name" value="PRK09369.1"/>
    <property type="match status" value="1"/>
</dbReference>
<dbReference type="PANTHER" id="PTHR43783">
    <property type="entry name" value="UDP-N-ACETYLGLUCOSAMINE 1-CARBOXYVINYLTRANSFERASE"/>
    <property type="match status" value="1"/>
</dbReference>
<dbReference type="PANTHER" id="PTHR43783:SF1">
    <property type="entry name" value="UDP-N-ACETYLGLUCOSAMINE 1-CARBOXYVINYLTRANSFERASE"/>
    <property type="match status" value="1"/>
</dbReference>
<dbReference type="Pfam" id="PF00275">
    <property type="entry name" value="EPSP_synthase"/>
    <property type="match status" value="1"/>
</dbReference>
<dbReference type="SUPFAM" id="SSF55205">
    <property type="entry name" value="EPT/RTPC-like"/>
    <property type="match status" value="1"/>
</dbReference>
<protein>
    <recommendedName>
        <fullName evidence="1">UDP-N-acetylglucosamine 1-carboxyvinyltransferase</fullName>
        <ecNumber evidence="1">2.5.1.7</ecNumber>
    </recommendedName>
    <alternativeName>
        <fullName evidence="1">Enoylpyruvate transferase</fullName>
    </alternativeName>
    <alternativeName>
        <fullName evidence="1">UDP-N-acetylglucosamine enolpyruvyl transferase</fullName>
        <shortName evidence="1">EPT</shortName>
    </alternativeName>
</protein>
<proteinExistence type="inferred from homology"/>
<keyword id="KW-0131">Cell cycle</keyword>
<keyword id="KW-0132">Cell division</keyword>
<keyword id="KW-0133">Cell shape</keyword>
<keyword id="KW-0961">Cell wall biogenesis/degradation</keyword>
<keyword id="KW-0963">Cytoplasm</keyword>
<keyword id="KW-0573">Peptidoglycan synthesis</keyword>
<keyword id="KW-0670">Pyruvate</keyword>
<keyword id="KW-1185">Reference proteome</keyword>
<keyword id="KW-0808">Transferase</keyword>
<reference key="1">
    <citation type="journal article" date="2003" name="Proc. Natl. Acad. Sci. U.S.A.">
        <title>The genome sequence of Blochmannia floridanus: comparative analysis of reduced genomes.</title>
        <authorList>
            <person name="Gil R."/>
            <person name="Silva F.J."/>
            <person name="Zientz E."/>
            <person name="Delmotte F."/>
            <person name="Gonzalez-Candelas F."/>
            <person name="Latorre A."/>
            <person name="Rausell C."/>
            <person name="Kamerbeek J."/>
            <person name="Gadau J."/>
            <person name="Hoelldobler B."/>
            <person name="van Ham R.C.H.J."/>
            <person name="Gross R."/>
            <person name="Moya A."/>
        </authorList>
    </citation>
    <scope>NUCLEOTIDE SEQUENCE [LARGE SCALE GENOMIC DNA]</scope>
</reference>
<evidence type="ECO:0000255" key="1">
    <source>
        <dbReference type="HAMAP-Rule" id="MF_00111"/>
    </source>
</evidence>
<gene>
    <name evidence="1" type="primary">murA</name>
    <name type="ordered locus">Bfl046</name>
</gene>
<feature type="chain" id="PRO_0000231172" description="UDP-N-acetylglucosamine 1-carboxyvinyltransferase">
    <location>
        <begin position="1"/>
        <end position="420"/>
    </location>
</feature>
<feature type="active site" description="Proton donor" evidence="1">
    <location>
        <position position="116"/>
    </location>
</feature>
<feature type="binding site" evidence="1">
    <location>
        <begin position="22"/>
        <end position="23"/>
    </location>
    <ligand>
        <name>phosphoenolpyruvate</name>
        <dbReference type="ChEBI" id="CHEBI:58702"/>
    </ligand>
</feature>
<feature type="binding site" evidence="1">
    <location>
        <position position="92"/>
    </location>
    <ligand>
        <name>UDP-N-acetyl-alpha-D-glucosamine</name>
        <dbReference type="ChEBI" id="CHEBI:57705"/>
    </ligand>
</feature>
<feature type="binding site" evidence="1">
    <location>
        <position position="306"/>
    </location>
    <ligand>
        <name>UDP-N-acetyl-alpha-D-glucosamine</name>
        <dbReference type="ChEBI" id="CHEBI:57705"/>
    </ligand>
</feature>
<feature type="binding site" evidence="1">
    <location>
        <position position="328"/>
    </location>
    <ligand>
        <name>UDP-N-acetyl-alpha-D-glucosamine</name>
        <dbReference type="ChEBI" id="CHEBI:57705"/>
    </ligand>
</feature>
<feature type="modified residue" description="2-(S-cysteinyl)pyruvic acid O-phosphothioketal" evidence="1">
    <location>
        <position position="116"/>
    </location>
</feature>
<sequence>MDRFHIQGPTTLKGEVVISGAKNSALPILFATLLTSEPVEIYNVPKLKDIDTAIKLLNQLGAQVEHQNIIVFSDTSKVHACCAPYDLVKSIRASIWILGPLVARFGYGKVWFPGGCSIGKRLVDLHIKGLKKLGAKIILGEEYVIASVNGRLQGAHIVMDKISVGATVTIMSAATLARGITIIDNAAREPEVIDTANFLIMLGTNIIGAGSNRIIIEGTQKLKGGRYCIIPDRIETGTFLVAAAISRSHVICLRSNPNILKCVLRKLRESGADINTGKDWISLNMHGRRPKAIKICTKPYPGFPTDMQAQFTLLNVVAIGVGKVIETIFENRFMHVPELIRMGARVQILNNTIICHGVDTLIGTRVVSTDLRASVSLVLAGCIAEGLTIIDQVNHVDRGYDNIERKLQNMGAHIQRITDK</sequence>
<organism>
    <name type="scientific">Blochmanniella floridana</name>
    <dbReference type="NCBI Taxonomy" id="203907"/>
    <lineage>
        <taxon>Bacteria</taxon>
        <taxon>Pseudomonadati</taxon>
        <taxon>Pseudomonadota</taxon>
        <taxon>Gammaproteobacteria</taxon>
        <taxon>Enterobacterales</taxon>
        <taxon>Enterobacteriaceae</taxon>
        <taxon>ant endosymbionts</taxon>
        <taxon>Candidatus Blochmanniella</taxon>
    </lineage>
</organism>
<name>MURA_BLOFL</name>